<feature type="chain" id="PRO_0000114534" description="Alanine racemase">
    <location>
        <begin position="1"/>
        <end position="368"/>
    </location>
</feature>
<feature type="active site" description="Proton acceptor; specific for D-alanine" evidence="1">
    <location>
        <position position="40"/>
    </location>
</feature>
<feature type="active site" description="Proton acceptor; specific for L-alanine" evidence="1">
    <location>
        <position position="263"/>
    </location>
</feature>
<feature type="binding site" evidence="1">
    <location>
        <position position="134"/>
    </location>
    <ligand>
        <name>substrate</name>
    </ligand>
</feature>
<feature type="binding site" evidence="1">
    <location>
        <position position="310"/>
    </location>
    <ligand>
        <name>substrate</name>
    </ligand>
</feature>
<feature type="modified residue" description="N6-(pyridoxal phosphate)lysine" evidence="1">
    <location>
        <position position="40"/>
    </location>
</feature>
<name>ALR_LISMO</name>
<sequence>MVTGWHRPTWIEIDRAAIRENIKNEQNKLPESVDLWAVVKANAYGHGIIEVARTAKEAGAKGFCVAILDEALALREAGFQDDFILVLGATRKEDANLAAKNHISLTVFREDWLENLTLEATLRIHLKVDSGMGRLGIRTTEEARRIEATSTNDHQLQLEGIYTHFATADQLETSYFEQQLAKFQTILTSLKNRPTYVHTANSAASLLQPQIGFDAIRFGISMYGLTPSTEIKTSLPFELKPALALYTEMVHVKELAPGDSVSYGATYTATEREWVATLPIGYADGLIRHYSGFHVLVGGELAPIIGRVCMDQTIIKLPREFQTGSKVTIIGKDHGNTITADDAAQYLDTINYEVTCLLNERIPRKYIH</sequence>
<keyword id="KW-0413">Isomerase</keyword>
<keyword id="KW-0663">Pyridoxal phosphate</keyword>
<keyword id="KW-1185">Reference proteome</keyword>
<comment type="function">
    <text evidence="1">Catalyzes the interconversion of L-alanine and D-alanine. May also act on other amino acids.</text>
</comment>
<comment type="catalytic activity">
    <reaction evidence="1">
        <text>L-alanine = D-alanine</text>
        <dbReference type="Rhea" id="RHEA:20249"/>
        <dbReference type="ChEBI" id="CHEBI:57416"/>
        <dbReference type="ChEBI" id="CHEBI:57972"/>
        <dbReference type="EC" id="5.1.1.1"/>
    </reaction>
</comment>
<comment type="cofactor">
    <cofactor evidence="1">
        <name>pyridoxal 5'-phosphate</name>
        <dbReference type="ChEBI" id="CHEBI:597326"/>
    </cofactor>
</comment>
<comment type="pathway">
    <text evidence="1">Amino-acid biosynthesis; D-alanine biosynthesis; D-alanine from L-alanine: step 1/1.</text>
</comment>
<comment type="similarity">
    <text evidence="1">Belongs to the alanine racemase family.</text>
</comment>
<reference key="1">
    <citation type="journal article" date="2001" name="Science">
        <title>Comparative genomics of Listeria species.</title>
        <authorList>
            <person name="Glaser P."/>
            <person name="Frangeul L."/>
            <person name="Buchrieser C."/>
            <person name="Rusniok C."/>
            <person name="Amend A."/>
            <person name="Baquero F."/>
            <person name="Berche P."/>
            <person name="Bloecker H."/>
            <person name="Brandt P."/>
            <person name="Chakraborty T."/>
            <person name="Charbit A."/>
            <person name="Chetouani F."/>
            <person name="Couve E."/>
            <person name="de Daruvar A."/>
            <person name="Dehoux P."/>
            <person name="Domann E."/>
            <person name="Dominguez-Bernal G."/>
            <person name="Duchaud E."/>
            <person name="Durant L."/>
            <person name="Dussurget O."/>
            <person name="Entian K.-D."/>
            <person name="Fsihi H."/>
            <person name="Garcia-del Portillo F."/>
            <person name="Garrido P."/>
            <person name="Gautier L."/>
            <person name="Goebel W."/>
            <person name="Gomez-Lopez N."/>
            <person name="Hain T."/>
            <person name="Hauf J."/>
            <person name="Jackson D."/>
            <person name="Jones L.-M."/>
            <person name="Kaerst U."/>
            <person name="Kreft J."/>
            <person name="Kuhn M."/>
            <person name="Kunst F."/>
            <person name="Kurapkat G."/>
            <person name="Madueno E."/>
            <person name="Maitournam A."/>
            <person name="Mata Vicente J."/>
            <person name="Ng E."/>
            <person name="Nedjari H."/>
            <person name="Nordsiek G."/>
            <person name="Novella S."/>
            <person name="de Pablos B."/>
            <person name="Perez-Diaz J.-C."/>
            <person name="Purcell R."/>
            <person name="Remmel B."/>
            <person name="Rose M."/>
            <person name="Schlueter T."/>
            <person name="Simoes N."/>
            <person name="Tierrez A."/>
            <person name="Vazquez-Boland J.-A."/>
            <person name="Voss H."/>
            <person name="Wehland J."/>
            <person name="Cossart P."/>
        </authorList>
    </citation>
    <scope>NUCLEOTIDE SEQUENCE [LARGE SCALE GENOMIC DNA]</scope>
    <source>
        <strain>ATCC BAA-679 / EGD-e</strain>
    </source>
</reference>
<gene>
    <name type="primary">alr</name>
    <name type="synonym">dal</name>
    <name type="ordered locus">lmo0886</name>
</gene>
<dbReference type="EC" id="5.1.1.1" evidence="1"/>
<dbReference type="EMBL" id="AL591977">
    <property type="protein sequence ID" value="CAC98964.1"/>
    <property type="molecule type" value="Genomic_DNA"/>
</dbReference>
<dbReference type="PIR" id="AF1185">
    <property type="entry name" value="AF1185"/>
</dbReference>
<dbReference type="RefSeq" id="NP_464412.1">
    <property type="nucleotide sequence ID" value="NC_003210.1"/>
</dbReference>
<dbReference type="RefSeq" id="WP_010989607.1">
    <property type="nucleotide sequence ID" value="NZ_CP149495.1"/>
</dbReference>
<dbReference type="SMR" id="P0DJL8"/>
<dbReference type="STRING" id="169963.gene:17593537"/>
<dbReference type="PaxDb" id="169963-lmo0886"/>
<dbReference type="EnsemblBacteria" id="CAC98964">
    <property type="protein sequence ID" value="CAC98964"/>
    <property type="gene ID" value="CAC98964"/>
</dbReference>
<dbReference type="GeneID" id="986294"/>
<dbReference type="KEGG" id="lmo:lmo0886"/>
<dbReference type="PATRIC" id="fig|169963.11.peg.911"/>
<dbReference type="eggNOG" id="COG0787">
    <property type="taxonomic scope" value="Bacteria"/>
</dbReference>
<dbReference type="HOGENOM" id="CLU_028393_2_1_9"/>
<dbReference type="OrthoDB" id="9813814at2"/>
<dbReference type="PhylomeDB" id="P0DJL8"/>
<dbReference type="BioCyc" id="LMON169963:LMO0886-MONOMER"/>
<dbReference type="UniPathway" id="UPA00042">
    <property type="reaction ID" value="UER00497"/>
</dbReference>
<dbReference type="Proteomes" id="UP000000817">
    <property type="component" value="Chromosome"/>
</dbReference>
<dbReference type="GO" id="GO:0005829">
    <property type="term" value="C:cytosol"/>
    <property type="evidence" value="ECO:0000318"/>
    <property type="project" value="GO_Central"/>
</dbReference>
<dbReference type="GO" id="GO:0008784">
    <property type="term" value="F:alanine racemase activity"/>
    <property type="evidence" value="ECO:0000318"/>
    <property type="project" value="GO_Central"/>
</dbReference>
<dbReference type="GO" id="GO:0030170">
    <property type="term" value="F:pyridoxal phosphate binding"/>
    <property type="evidence" value="ECO:0000318"/>
    <property type="project" value="GO_Central"/>
</dbReference>
<dbReference type="GO" id="GO:0030632">
    <property type="term" value="P:D-alanine biosynthetic process"/>
    <property type="evidence" value="ECO:0000318"/>
    <property type="project" value="GO_Central"/>
</dbReference>
<dbReference type="GO" id="GO:0009252">
    <property type="term" value="P:peptidoglycan biosynthetic process"/>
    <property type="evidence" value="ECO:0000318"/>
    <property type="project" value="GO_Central"/>
</dbReference>
<dbReference type="CDD" id="cd00430">
    <property type="entry name" value="PLPDE_III_AR"/>
    <property type="match status" value="1"/>
</dbReference>
<dbReference type="FunFam" id="2.40.37.10:FF:000006">
    <property type="entry name" value="Alanine racemase"/>
    <property type="match status" value="1"/>
</dbReference>
<dbReference type="FunFam" id="3.20.20.10:FF:000002">
    <property type="entry name" value="Alanine racemase"/>
    <property type="match status" value="1"/>
</dbReference>
<dbReference type="Gene3D" id="3.20.20.10">
    <property type="entry name" value="Alanine racemase"/>
    <property type="match status" value="1"/>
</dbReference>
<dbReference type="Gene3D" id="2.40.37.10">
    <property type="entry name" value="Lyase, Ornithine Decarboxylase, Chain A, domain 1"/>
    <property type="match status" value="1"/>
</dbReference>
<dbReference type="HAMAP" id="MF_01201">
    <property type="entry name" value="Ala_racemase"/>
    <property type="match status" value="1"/>
</dbReference>
<dbReference type="InterPro" id="IPR000821">
    <property type="entry name" value="Ala_racemase"/>
</dbReference>
<dbReference type="InterPro" id="IPR009006">
    <property type="entry name" value="Ala_racemase/Decarboxylase_C"/>
</dbReference>
<dbReference type="InterPro" id="IPR011079">
    <property type="entry name" value="Ala_racemase_C"/>
</dbReference>
<dbReference type="InterPro" id="IPR001608">
    <property type="entry name" value="Ala_racemase_N"/>
</dbReference>
<dbReference type="InterPro" id="IPR020622">
    <property type="entry name" value="Ala_racemase_pyridoxalP-BS"/>
</dbReference>
<dbReference type="InterPro" id="IPR029066">
    <property type="entry name" value="PLP-binding_barrel"/>
</dbReference>
<dbReference type="NCBIfam" id="TIGR00492">
    <property type="entry name" value="alr"/>
    <property type="match status" value="1"/>
</dbReference>
<dbReference type="PANTHER" id="PTHR30511">
    <property type="entry name" value="ALANINE RACEMASE"/>
    <property type="match status" value="1"/>
</dbReference>
<dbReference type="PANTHER" id="PTHR30511:SF0">
    <property type="entry name" value="ALANINE RACEMASE, CATABOLIC-RELATED"/>
    <property type="match status" value="1"/>
</dbReference>
<dbReference type="Pfam" id="PF00842">
    <property type="entry name" value="Ala_racemase_C"/>
    <property type="match status" value="1"/>
</dbReference>
<dbReference type="Pfam" id="PF01168">
    <property type="entry name" value="Ala_racemase_N"/>
    <property type="match status" value="1"/>
</dbReference>
<dbReference type="PRINTS" id="PR00992">
    <property type="entry name" value="ALARACEMASE"/>
</dbReference>
<dbReference type="SMART" id="SM01005">
    <property type="entry name" value="Ala_racemase_C"/>
    <property type="match status" value="1"/>
</dbReference>
<dbReference type="SUPFAM" id="SSF50621">
    <property type="entry name" value="Alanine racemase C-terminal domain-like"/>
    <property type="match status" value="1"/>
</dbReference>
<dbReference type="SUPFAM" id="SSF51419">
    <property type="entry name" value="PLP-binding barrel"/>
    <property type="match status" value="1"/>
</dbReference>
<dbReference type="PROSITE" id="PS00395">
    <property type="entry name" value="ALANINE_RACEMASE"/>
    <property type="match status" value="1"/>
</dbReference>
<proteinExistence type="inferred from homology"/>
<organism>
    <name type="scientific">Listeria monocytogenes serovar 1/2a (strain ATCC BAA-679 / EGD-e)</name>
    <dbReference type="NCBI Taxonomy" id="169963"/>
    <lineage>
        <taxon>Bacteria</taxon>
        <taxon>Bacillati</taxon>
        <taxon>Bacillota</taxon>
        <taxon>Bacilli</taxon>
        <taxon>Bacillales</taxon>
        <taxon>Listeriaceae</taxon>
        <taxon>Listeria</taxon>
    </lineage>
</organism>
<evidence type="ECO:0000255" key="1">
    <source>
        <dbReference type="HAMAP-Rule" id="MF_01201"/>
    </source>
</evidence>
<protein>
    <recommendedName>
        <fullName evidence="1">Alanine racemase</fullName>
        <ecNumber evidence="1">5.1.1.1</ecNumber>
    </recommendedName>
</protein>
<accession>P0DJL8</accession>
<accession>O85045</accession>